<sequence length="242" mass="26803">MIFSNNKKLKFKRVIIKLSGEALQGVHKFGIDIIELNRIAKEIKAIFDLGVQIGIVIGGGNIFRGKKLAKFGINKVISDYVGMLSTIMNGLLLCDSMDLVHLSSCLMSSICIDKICEQYSFKKALSLLRRNKVVVFSGGLGNPFFTTDSAACLRAIEMRADIVLKGTKVNGVYSSDPKKSSNSILYKNISYNEVLQKELKVMDLAAFALARDHKLPICIFNINKPNALYYIVTGQKEGTLIR</sequence>
<protein>
    <recommendedName>
        <fullName evidence="1">Uridylate kinase</fullName>
        <shortName evidence="1">UK</shortName>
        <ecNumber evidence="1">2.7.4.22</ecNumber>
    </recommendedName>
    <alternativeName>
        <fullName evidence="1">Uridine monophosphate kinase</fullName>
        <shortName evidence="1">UMP kinase</shortName>
        <shortName evidence="1">UMPK</shortName>
    </alternativeName>
</protein>
<accession>P59578</accession>
<organism>
    <name type="scientific">Buchnera aphidicola subsp. Baizongia pistaciae (strain Bp)</name>
    <dbReference type="NCBI Taxonomy" id="224915"/>
    <lineage>
        <taxon>Bacteria</taxon>
        <taxon>Pseudomonadati</taxon>
        <taxon>Pseudomonadota</taxon>
        <taxon>Gammaproteobacteria</taxon>
        <taxon>Enterobacterales</taxon>
        <taxon>Erwiniaceae</taxon>
        <taxon>Buchnera</taxon>
    </lineage>
</organism>
<dbReference type="EC" id="2.7.4.22" evidence="1"/>
<dbReference type="EMBL" id="AE016826">
    <property type="protein sequence ID" value="AAO26947.1"/>
    <property type="molecule type" value="Genomic_DNA"/>
</dbReference>
<dbReference type="RefSeq" id="WP_011091348.1">
    <property type="nucleotide sequence ID" value="NC_004545.1"/>
</dbReference>
<dbReference type="SMR" id="P59578"/>
<dbReference type="STRING" id="224915.bbp_215"/>
<dbReference type="KEGG" id="bab:bbp_215"/>
<dbReference type="eggNOG" id="COG0528">
    <property type="taxonomic scope" value="Bacteria"/>
</dbReference>
<dbReference type="HOGENOM" id="CLU_033861_0_0_6"/>
<dbReference type="OrthoDB" id="9807458at2"/>
<dbReference type="UniPathway" id="UPA00159">
    <property type="reaction ID" value="UER00275"/>
</dbReference>
<dbReference type="Proteomes" id="UP000000601">
    <property type="component" value="Chromosome"/>
</dbReference>
<dbReference type="GO" id="GO:0005829">
    <property type="term" value="C:cytosol"/>
    <property type="evidence" value="ECO:0007669"/>
    <property type="project" value="TreeGrafter"/>
</dbReference>
<dbReference type="GO" id="GO:0005524">
    <property type="term" value="F:ATP binding"/>
    <property type="evidence" value="ECO:0007669"/>
    <property type="project" value="UniProtKB-KW"/>
</dbReference>
<dbReference type="GO" id="GO:0033862">
    <property type="term" value="F:UMP kinase activity"/>
    <property type="evidence" value="ECO:0007669"/>
    <property type="project" value="UniProtKB-EC"/>
</dbReference>
<dbReference type="GO" id="GO:0044210">
    <property type="term" value="P:'de novo' CTP biosynthetic process"/>
    <property type="evidence" value="ECO:0007669"/>
    <property type="project" value="UniProtKB-UniRule"/>
</dbReference>
<dbReference type="GO" id="GO:0006225">
    <property type="term" value="P:UDP biosynthetic process"/>
    <property type="evidence" value="ECO:0007669"/>
    <property type="project" value="TreeGrafter"/>
</dbReference>
<dbReference type="CDD" id="cd04254">
    <property type="entry name" value="AAK_UMPK-PyrH-Ec"/>
    <property type="match status" value="1"/>
</dbReference>
<dbReference type="FunFam" id="3.40.1160.10:FF:000001">
    <property type="entry name" value="Uridylate kinase"/>
    <property type="match status" value="1"/>
</dbReference>
<dbReference type="Gene3D" id="3.40.1160.10">
    <property type="entry name" value="Acetylglutamate kinase-like"/>
    <property type="match status" value="1"/>
</dbReference>
<dbReference type="HAMAP" id="MF_01220_B">
    <property type="entry name" value="PyrH_B"/>
    <property type="match status" value="1"/>
</dbReference>
<dbReference type="InterPro" id="IPR036393">
    <property type="entry name" value="AceGlu_kinase-like_sf"/>
</dbReference>
<dbReference type="InterPro" id="IPR001048">
    <property type="entry name" value="Asp/Glu/Uridylate_kinase"/>
</dbReference>
<dbReference type="InterPro" id="IPR011817">
    <property type="entry name" value="Uridylate_kinase"/>
</dbReference>
<dbReference type="InterPro" id="IPR015963">
    <property type="entry name" value="Uridylate_kinase_bac"/>
</dbReference>
<dbReference type="NCBIfam" id="TIGR02075">
    <property type="entry name" value="pyrH_bact"/>
    <property type="match status" value="1"/>
</dbReference>
<dbReference type="PANTHER" id="PTHR42833">
    <property type="entry name" value="URIDYLATE KINASE"/>
    <property type="match status" value="1"/>
</dbReference>
<dbReference type="PANTHER" id="PTHR42833:SF4">
    <property type="entry name" value="URIDYLATE KINASE PUMPKIN, CHLOROPLASTIC"/>
    <property type="match status" value="1"/>
</dbReference>
<dbReference type="Pfam" id="PF00696">
    <property type="entry name" value="AA_kinase"/>
    <property type="match status" value="1"/>
</dbReference>
<dbReference type="PIRSF" id="PIRSF005650">
    <property type="entry name" value="Uridylate_kin"/>
    <property type="match status" value="1"/>
</dbReference>
<dbReference type="SUPFAM" id="SSF53633">
    <property type="entry name" value="Carbamate kinase-like"/>
    <property type="match status" value="1"/>
</dbReference>
<name>PYRH_BUCBP</name>
<evidence type="ECO:0000255" key="1">
    <source>
        <dbReference type="HAMAP-Rule" id="MF_01220"/>
    </source>
</evidence>
<keyword id="KW-0067">ATP-binding</keyword>
<keyword id="KW-0963">Cytoplasm</keyword>
<keyword id="KW-0418">Kinase</keyword>
<keyword id="KW-0547">Nucleotide-binding</keyword>
<keyword id="KW-0665">Pyrimidine biosynthesis</keyword>
<keyword id="KW-1185">Reference proteome</keyword>
<keyword id="KW-0808">Transferase</keyword>
<proteinExistence type="inferred from homology"/>
<reference key="1">
    <citation type="journal article" date="2003" name="Proc. Natl. Acad. Sci. U.S.A.">
        <title>Reductive genome evolution in Buchnera aphidicola.</title>
        <authorList>
            <person name="van Ham R.C.H.J."/>
            <person name="Kamerbeek J."/>
            <person name="Palacios C."/>
            <person name="Rausell C."/>
            <person name="Abascal F."/>
            <person name="Bastolla U."/>
            <person name="Fernandez J.M."/>
            <person name="Jimenez L."/>
            <person name="Postigo M."/>
            <person name="Silva F.J."/>
            <person name="Tamames J."/>
            <person name="Viguera E."/>
            <person name="Latorre A."/>
            <person name="Valencia A."/>
            <person name="Moran F."/>
            <person name="Moya A."/>
        </authorList>
    </citation>
    <scope>NUCLEOTIDE SEQUENCE [LARGE SCALE GENOMIC DNA]</scope>
    <source>
        <strain>Bp</strain>
    </source>
</reference>
<feature type="chain" id="PRO_0000143831" description="Uridylate kinase">
    <location>
        <begin position="1"/>
        <end position="242"/>
    </location>
</feature>
<feature type="binding site" evidence="1">
    <location>
        <begin position="17"/>
        <end position="20"/>
    </location>
    <ligand>
        <name>ATP</name>
        <dbReference type="ChEBI" id="CHEBI:30616"/>
    </ligand>
</feature>
<feature type="binding site" evidence="1">
    <location>
        <position position="59"/>
    </location>
    <ligand>
        <name>UMP</name>
        <dbReference type="ChEBI" id="CHEBI:57865"/>
    </ligand>
</feature>
<feature type="binding site" evidence="1">
    <location>
        <position position="60"/>
    </location>
    <ligand>
        <name>ATP</name>
        <dbReference type="ChEBI" id="CHEBI:30616"/>
    </ligand>
</feature>
<feature type="binding site" evidence="1">
    <location>
        <position position="64"/>
    </location>
    <ligand>
        <name>ATP</name>
        <dbReference type="ChEBI" id="CHEBI:30616"/>
    </ligand>
</feature>
<feature type="binding site" evidence="1">
    <location>
        <position position="79"/>
    </location>
    <ligand>
        <name>UMP</name>
        <dbReference type="ChEBI" id="CHEBI:57865"/>
    </ligand>
</feature>
<feature type="binding site" evidence="1">
    <location>
        <begin position="140"/>
        <end position="147"/>
    </location>
    <ligand>
        <name>UMP</name>
        <dbReference type="ChEBI" id="CHEBI:57865"/>
    </ligand>
</feature>
<feature type="binding site" evidence="1">
    <location>
        <position position="167"/>
    </location>
    <ligand>
        <name>ATP</name>
        <dbReference type="ChEBI" id="CHEBI:30616"/>
    </ligand>
</feature>
<feature type="binding site" evidence="1">
    <location>
        <position position="173"/>
    </location>
    <ligand>
        <name>ATP</name>
        <dbReference type="ChEBI" id="CHEBI:30616"/>
    </ligand>
</feature>
<feature type="binding site" evidence="1">
    <location>
        <position position="176"/>
    </location>
    <ligand>
        <name>ATP</name>
        <dbReference type="ChEBI" id="CHEBI:30616"/>
    </ligand>
</feature>
<gene>
    <name evidence="1" type="primary">pyrH</name>
    <name type="ordered locus">bbp_215</name>
</gene>
<comment type="function">
    <text evidence="1">Catalyzes the reversible phosphorylation of UMP to UDP.</text>
</comment>
<comment type="catalytic activity">
    <reaction evidence="1">
        <text>UMP + ATP = UDP + ADP</text>
        <dbReference type="Rhea" id="RHEA:24400"/>
        <dbReference type="ChEBI" id="CHEBI:30616"/>
        <dbReference type="ChEBI" id="CHEBI:57865"/>
        <dbReference type="ChEBI" id="CHEBI:58223"/>
        <dbReference type="ChEBI" id="CHEBI:456216"/>
        <dbReference type="EC" id="2.7.4.22"/>
    </reaction>
</comment>
<comment type="activity regulation">
    <text evidence="1">Inhibited by UTP.</text>
</comment>
<comment type="pathway">
    <text evidence="1">Pyrimidine metabolism; CTP biosynthesis via de novo pathway; UDP from UMP (UMPK route): step 1/1.</text>
</comment>
<comment type="subunit">
    <text evidence="1">Homohexamer.</text>
</comment>
<comment type="subcellular location">
    <subcellularLocation>
        <location evidence="1">Cytoplasm</location>
    </subcellularLocation>
</comment>
<comment type="similarity">
    <text evidence="1">Belongs to the UMP kinase family.</text>
</comment>